<protein>
    <recommendedName>
        <fullName evidence="1">Antiholin-like protein LrgB</fullName>
    </recommendedName>
</protein>
<gene>
    <name evidence="1" type="primary">lrgB</name>
    <name type="ordered locus">BAMEG_5736</name>
</gene>
<name>LRGB_BACAC</name>
<reference key="1">
    <citation type="submission" date="2008-10" db="EMBL/GenBank/DDBJ databases">
        <title>Genome sequence of Bacillus anthracis str. CDC 684.</title>
        <authorList>
            <person name="Dodson R.J."/>
            <person name="Munk A.C."/>
            <person name="Brettin T."/>
            <person name="Bruce D."/>
            <person name="Detter C."/>
            <person name="Tapia R."/>
            <person name="Han C."/>
            <person name="Sutton G."/>
            <person name="Sims D."/>
        </authorList>
    </citation>
    <scope>NUCLEOTIDE SEQUENCE [LARGE SCALE GENOMIC DNA]</scope>
    <source>
        <strain>CDC 684 / NRRL 3495</strain>
    </source>
</reference>
<keyword id="KW-1003">Cell membrane</keyword>
<keyword id="KW-0204">Cytolysis</keyword>
<keyword id="KW-0472">Membrane</keyword>
<keyword id="KW-0812">Transmembrane</keyword>
<keyword id="KW-1133">Transmembrane helix</keyword>
<accession>C3LGP7</accession>
<feature type="chain" id="PRO_1000164101" description="Antiholin-like protein LrgB">
    <location>
        <begin position="1"/>
        <end position="230"/>
    </location>
</feature>
<feature type="transmembrane region" description="Helical" evidence="1">
    <location>
        <begin position="5"/>
        <end position="25"/>
    </location>
</feature>
<feature type="transmembrane region" description="Helical" evidence="1">
    <location>
        <begin position="30"/>
        <end position="50"/>
    </location>
</feature>
<feature type="transmembrane region" description="Helical" evidence="1">
    <location>
        <begin position="61"/>
        <end position="81"/>
    </location>
</feature>
<feature type="transmembrane region" description="Helical" evidence="1">
    <location>
        <begin position="92"/>
        <end position="112"/>
    </location>
</feature>
<feature type="transmembrane region" description="Helical" evidence="1">
    <location>
        <begin position="149"/>
        <end position="169"/>
    </location>
</feature>
<feature type="transmembrane region" description="Helical" evidence="1">
    <location>
        <begin position="177"/>
        <end position="197"/>
    </location>
</feature>
<feature type="transmembrane region" description="Helical" evidence="1">
    <location>
        <begin position="209"/>
        <end position="229"/>
    </location>
</feature>
<evidence type="ECO:0000255" key="1">
    <source>
        <dbReference type="HAMAP-Rule" id="MF_01142"/>
    </source>
</evidence>
<organism>
    <name type="scientific">Bacillus anthracis (strain CDC 684 / NRRL 3495)</name>
    <dbReference type="NCBI Taxonomy" id="568206"/>
    <lineage>
        <taxon>Bacteria</taxon>
        <taxon>Bacillati</taxon>
        <taxon>Bacillota</taxon>
        <taxon>Bacilli</taxon>
        <taxon>Bacillales</taxon>
        <taxon>Bacillaceae</taxon>
        <taxon>Bacillus</taxon>
        <taxon>Bacillus cereus group</taxon>
    </lineage>
</organism>
<sequence>MASTMTPYFGIVVSLIAYGIGTLLFKHSKGFFLFTPLFVAMVLGIVFLKVGNFTFEEYNTGGKMISFFLEPATIAFAIPLYKQVDKLKKYWWQILSAIVVGSICSVIVVFIVAKAIGLDTAVMNSMLPQAATTAIALPISESIGGIPAITSFAVIFNAVIVYALGALFLKTFRVKHPIAKGLALGTAGHALGVAVGIEMGEVEAAMASIAVTVVGVVTVVVIPMFMPFIG</sequence>
<dbReference type="EMBL" id="CP001215">
    <property type="protein sequence ID" value="ACP15562.1"/>
    <property type="molecule type" value="Genomic_DNA"/>
</dbReference>
<dbReference type="RefSeq" id="WP_000168869.1">
    <property type="nucleotide sequence ID" value="NC_012581.1"/>
</dbReference>
<dbReference type="GeneID" id="93005687"/>
<dbReference type="KEGG" id="bah:BAMEG_5736"/>
<dbReference type="HOGENOM" id="CLU_082099_1_0_9"/>
<dbReference type="GO" id="GO:0005886">
    <property type="term" value="C:plasma membrane"/>
    <property type="evidence" value="ECO:0007669"/>
    <property type="project" value="UniProtKB-SubCell"/>
</dbReference>
<dbReference type="GO" id="GO:0019835">
    <property type="term" value="P:cytolysis"/>
    <property type="evidence" value="ECO:0007669"/>
    <property type="project" value="UniProtKB-UniRule"/>
</dbReference>
<dbReference type="GO" id="GO:0031640">
    <property type="term" value="P:killing of cells of another organism"/>
    <property type="evidence" value="ECO:0007669"/>
    <property type="project" value="UniProtKB-KW"/>
</dbReference>
<dbReference type="GO" id="GO:0012501">
    <property type="term" value="P:programmed cell death"/>
    <property type="evidence" value="ECO:0007669"/>
    <property type="project" value="UniProtKB-UniRule"/>
</dbReference>
<dbReference type="HAMAP" id="MF_01142">
    <property type="entry name" value="LrgB"/>
    <property type="match status" value="1"/>
</dbReference>
<dbReference type="InterPro" id="IPR024891">
    <property type="entry name" value="Antiholin-like_LrgB"/>
</dbReference>
<dbReference type="InterPro" id="IPR007300">
    <property type="entry name" value="CidB/LrgB"/>
</dbReference>
<dbReference type="NCBIfam" id="NF003291">
    <property type="entry name" value="PRK04288.1"/>
    <property type="match status" value="1"/>
</dbReference>
<dbReference type="PANTHER" id="PTHR30249:SF0">
    <property type="entry name" value="PLASTIDAL GLYCOLATE_GLYCERATE TRANSLOCATOR 1, CHLOROPLASTIC"/>
    <property type="match status" value="1"/>
</dbReference>
<dbReference type="PANTHER" id="PTHR30249">
    <property type="entry name" value="PUTATIVE SEROTONIN TRANSPORTER"/>
    <property type="match status" value="1"/>
</dbReference>
<dbReference type="Pfam" id="PF04172">
    <property type="entry name" value="LrgB"/>
    <property type="match status" value="1"/>
</dbReference>
<comment type="function">
    <text evidence="1">Inhibits the expression or activity of extracellular murein hydrolases by interacting, possibly with LrgA, with the holin-like protein CidA. The LrgAB and CidA proteins may affect the proton motive force of the membrane. May be involved in programmed cell death (PCD), possibly triggering PCD in response to antibiotics and environmental stresses.</text>
</comment>
<comment type="subcellular location">
    <subcellularLocation>
        <location evidence="1">Cell membrane</location>
        <topology evidence="1">Multi-pass membrane protein</topology>
    </subcellularLocation>
</comment>
<comment type="similarity">
    <text evidence="1">Belongs to the CidB/LrgB family. LrgB subfamily.</text>
</comment>
<proteinExistence type="inferred from homology"/>